<proteinExistence type="evidence at transcript level"/>
<reference key="1">
    <citation type="submission" date="2005-05" db="EMBL/GenBank/DDBJ databases">
        <authorList>
            <consortium name="NIH - Zebrafish Gene Collection (ZGC) project"/>
        </authorList>
    </citation>
    <scope>NUCLEOTIDE SEQUENCE [LARGE SCALE MRNA]</scope>
    <source>
        <tissue>Embryo</tissue>
    </source>
</reference>
<gene>
    <name type="primary">cpsf3l</name>
    <name type="synonym">ints11</name>
    <name type="ORF">zgc:110671</name>
</gene>
<accession>Q503E1</accession>
<name>INT11_DANRE</name>
<feature type="chain" id="PRO_0000259568" description="Integrator complex subunit 11">
    <location>
        <begin position="1"/>
        <end position="598"/>
    </location>
</feature>
<feature type="short sequence motif" description="HXHXDH motif">
    <location>
        <begin position="68"/>
        <end position="73"/>
    </location>
</feature>
<feature type="short sequence motif" description="Nuclear localization signal" evidence="1">
    <location>
        <begin position="470"/>
        <end position="480"/>
    </location>
</feature>
<feature type="active site" evidence="1">
    <location>
        <position position="203"/>
    </location>
</feature>
<feature type="binding site" evidence="1">
    <location>
        <position position="68"/>
    </location>
    <ligand>
        <name>Zn(2+)</name>
        <dbReference type="ChEBI" id="CHEBI:29105"/>
        <label>1</label>
    </ligand>
</feature>
<feature type="binding site" evidence="1">
    <location>
        <position position="70"/>
    </location>
    <ligand>
        <name>Zn(2+)</name>
        <dbReference type="ChEBI" id="CHEBI:29105"/>
        <label>1</label>
    </ligand>
</feature>
<feature type="binding site" evidence="1">
    <location>
        <position position="72"/>
    </location>
    <ligand>
        <name>Zn(2+)</name>
        <dbReference type="ChEBI" id="CHEBI:29105"/>
        <label>2</label>
    </ligand>
</feature>
<feature type="binding site" evidence="1">
    <location>
        <position position="73"/>
    </location>
    <ligand>
        <name>Zn(2+)</name>
        <dbReference type="ChEBI" id="CHEBI:29105"/>
        <label>2</label>
    </ligand>
</feature>
<feature type="binding site" evidence="1">
    <location>
        <position position="157"/>
    </location>
    <ligand>
        <name>Zn(2+)</name>
        <dbReference type="ChEBI" id="CHEBI:29105"/>
        <label>1</label>
    </ligand>
</feature>
<feature type="binding site" evidence="1">
    <location>
        <position position="178"/>
    </location>
    <ligand>
        <name>Zn(2+)</name>
        <dbReference type="ChEBI" id="CHEBI:29105"/>
        <label>1</label>
    </ligand>
</feature>
<feature type="binding site" evidence="1">
    <location>
        <position position="178"/>
    </location>
    <ligand>
        <name>Zn(2+)</name>
        <dbReference type="ChEBI" id="CHEBI:29105"/>
        <label>2</label>
    </ligand>
</feature>
<feature type="binding site" evidence="1">
    <location>
        <position position="414"/>
    </location>
    <ligand>
        <name>Zn(2+)</name>
        <dbReference type="ChEBI" id="CHEBI:29105"/>
        <label>2</label>
    </ligand>
</feature>
<evidence type="ECO:0000250" key="1">
    <source>
        <dbReference type="UniProtKB" id="Q5TA45"/>
    </source>
</evidence>
<evidence type="ECO:0000305" key="2"/>
<protein>
    <recommendedName>
        <fullName>Integrator complex subunit 11</fullName>
        <shortName>Int11</shortName>
        <ecNumber>3.1.27.-</ecNumber>
    </recommendedName>
    <alternativeName>
        <fullName>Cleavage and polyadenylation-specific factor 3-like protein</fullName>
        <shortName>CPSF3-like protein</shortName>
    </alternativeName>
</protein>
<keyword id="KW-0963">Cytoplasm</keyword>
<keyword id="KW-0378">Hydrolase</keyword>
<keyword id="KW-0479">Metal-binding</keyword>
<keyword id="KW-0539">Nucleus</keyword>
<keyword id="KW-1185">Reference proteome</keyword>
<keyword id="KW-0862">Zinc</keyword>
<sequence>MPDIKVTPLGAGQDVGRSCILVSIGGKNIMLDCGMHMGFNDDRRFPDFSYITQNGRLTEFLDCVIISHFHLDHCGALPYMSEMVGYDGPIYMTHPTKAICPILLEDFRKITVDKKGETNFFTSQMIKDCMKKVVPLNLHQTVQVDDELEIKAYYAGHVLGAAMVQIKVGSESVVYTGDYNMTPDRHLGAAWIDKCRPDILISESTYATTIRDSKRCRERDFLKKVHETVERGGKVLIPVFALGRAQELCILLETFWERMNLKAPIYFSTGLTEKANHYYKLFITWTNQKIRKTFVQRNMFEFKHIKAFDRSYADNPGPMVVFATPGMLHAGQSLQIFKKWAGNEKNMVIMPGYCVQGTVGHKILNGQKKLEMEGRATLDVKLQVEYMSFSAHADAKGIMQLIRMAEPRNMLLVHGEAKKMEFLKDKIEQEFSISCFMPANGETTTIVTNPSVPVDISLNLLKREMALGGPLPDAKRPRTMHGTLIMKDNSLRLVSPEQALKELGLNEHQLRFTCRVQLHDPHSDTDTLSRIYTHLKSVLKSYSIQHVPDGTVIVESIVIKVTSSAEEPNLKVILLSWSYQDEELGSFLSTLLKKGLPS</sequence>
<comment type="function">
    <text evidence="1">RNA endonuclease component of the integrator complex, a multiprotein complex that terminates RNA polymerase II (Pol II) transcription in the promoter-proximal region of genes. The integrator complex provides a quality checkpoint during transcription elongation by driving premature transcription termination of transcripts that are unfavorably configured for transcriptional elongation: the complex terminates transcription by (1) catalyzing dephosphorylation of the C-terminal domain (CTD) of Pol II subunit POLR2A/RPB1 and SUPT5H/SPT5, (2) degrading the exiting nascent RNA transcript via endonuclease activity and (3) promoting the release of Pol II from bound DNA. The integrator complex is also involved in terminating the synthesis of non-coding Pol II transcripts, such as enhancer RNAs (eRNAs), small nuclear RNAs (snRNAs), telomerase RNAs and long non-coding RNAs (lncRNAs). Within the integrator complex, INTS11 constitutes the RNA endonuclease subunit that degrades exiting nascent RNA transcripts.</text>
</comment>
<comment type="cofactor">
    <cofactor evidence="1">
        <name>Zn(2+)</name>
        <dbReference type="ChEBI" id="CHEBI:29105"/>
    </cofactor>
</comment>
<comment type="subunit">
    <text evidence="1">Component of the Integrator complex, composed of core subunits INTS1, INTS2, INTS3, INTS4, INTS5, INTS6, INTS7, INTS8, INTS9/RC74, INTS10, INTS11/CPSF3L, INTS12, INTS13, INTS14 and INTS15. The core complex associates with protein phosphatase 2A subunits PPP2CA and PPP2R1A, to form the Integrator-PP2A (INTAC) complex. INTS11 is part of the RNA endonuclease subcomplex, composed of INTS4, INTS9, INTS11 and inositol hexakisphosphate (InsP6).</text>
</comment>
<comment type="subcellular location">
    <subcellularLocation>
        <location evidence="1">Nucleus</location>
    </subcellularLocation>
    <subcellularLocation>
        <location evidence="1">Cytoplasm</location>
    </subcellularLocation>
</comment>
<comment type="similarity">
    <text evidence="2">Belongs to the metallo-beta-lactamase superfamily. RNA-metabolizing metallo-beta-lactamase-like family. INTS11 subfamily.</text>
</comment>
<organism>
    <name type="scientific">Danio rerio</name>
    <name type="common">Zebrafish</name>
    <name type="synonym">Brachydanio rerio</name>
    <dbReference type="NCBI Taxonomy" id="7955"/>
    <lineage>
        <taxon>Eukaryota</taxon>
        <taxon>Metazoa</taxon>
        <taxon>Chordata</taxon>
        <taxon>Craniata</taxon>
        <taxon>Vertebrata</taxon>
        <taxon>Euteleostomi</taxon>
        <taxon>Actinopterygii</taxon>
        <taxon>Neopterygii</taxon>
        <taxon>Teleostei</taxon>
        <taxon>Ostariophysi</taxon>
        <taxon>Cypriniformes</taxon>
        <taxon>Danionidae</taxon>
        <taxon>Danioninae</taxon>
        <taxon>Danio</taxon>
    </lineage>
</organism>
<dbReference type="EC" id="3.1.27.-"/>
<dbReference type="EMBL" id="BC095364">
    <property type="protein sequence ID" value="AAH95364.1"/>
    <property type="molecule type" value="mRNA"/>
</dbReference>
<dbReference type="RefSeq" id="NP_001018457.1">
    <property type="nucleotide sequence ID" value="NM_001020621.1"/>
</dbReference>
<dbReference type="SMR" id="Q503E1"/>
<dbReference type="FunCoup" id="Q503E1">
    <property type="interactions" value="1376"/>
</dbReference>
<dbReference type="STRING" id="7955.ENSDARP00000032843"/>
<dbReference type="PaxDb" id="7955-ENSDARP00000093676"/>
<dbReference type="GeneID" id="553648"/>
<dbReference type="KEGG" id="dre:553648"/>
<dbReference type="AGR" id="ZFIN:ZDB-GENE-050522-13"/>
<dbReference type="CTD" id="54973"/>
<dbReference type="ZFIN" id="ZDB-GENE-050522-13">
    <property type="gene designation" value="ints11"/>
</dbReference>
<dbReference type="eggNOG" id="KOG1136">
    <property type="taxonomic scope" value="Eukaryota"/>
</dbReference>
<dbReference type="InParanoid" id="Q503E1"/>
<dbReference type="OrthoDB" id="10249535at2759"/>
<dbReference type="PhylomeDB" id="Q503E1"/>
<dbReference type="Reactome" id="R-DRE-6807505">
    <property type="pathway name" value="RNA polymerase II transcribes snRNA genes"/>
</dbReference>
<dbReference type="PRO" id="PR:Q503E1"/>
<dbReference type="Proteomes" id="UP000000437">
    <property type="component" value="Chromosome 23"/>
</dbReference>
<dbReference type="GO" id="GO:0005737">
    <property type="term" value="C:cytoplasm"/>
    <property type="evidence" value="ECO:0000250"/>
    <property type="project" value="UniProtKB"/>
</dbReference>
<dbReference type="GO" id="GO:0160232">
    <property type="term" value="C:INTAC complex"/>
    <property type="evidence" value="ECO:0000250"/>
    <property type="project" value="UniProtKB"/>
</dbReference>
<dbReference type="GO" id="GO:0032039">
    <property type="term" value="C:integrator complex"/>
    <property type="evidence" value="ECO:0000250"/>
    <property type="project" value="UniProtKB"/>
</dbReference>
<dbReference type="GO" id="GO:0005634">
    <property type="term" value="C:nucleus"/>
    <property type="evidence" value="ECO:0000250"/>
    <property type="project" value="UniProtKB"/>
</dbReference>
<dbReference type="GO" id="GO:0004521">
    <property type="term" value="F:RNA endonuclease activity"/>
    <property type="evidence" value="ECO:0000250"/>
    <property type="project" value="UniProtKB"/>
</dbReference>
<dbReference type="GO" id="GO:0043484">
    <property type="term" value="P:regulation of RNA splicing"/>
    <property type="evidence" value="ECO:0000315"/>
    <property type="project" value="ZFIN"/>
</dbReference>
<dbReference type="GO" id="GO:0160240">
    <property type="term" value="P:RNA polymerase II transcription initiation surveillance"/>
    <property type="evidence" value="ECO:0000250"/>
    <property type="project" value="UniProtKB"/>
</dbReference>
<dbReference type="GO" id="GO:0034472">
    <property type="term" value="P:snRNA 3'-end processing"/>
    <property type="evidence" value="ECO:0000250"/>
    <property type="project" value="UniProtKB"/>
</dbReference>
<dbReference type="GO" id="GO:0016180">
    <property type="term" value="P:snRNA processing"/>
    <property type="evidence" value="ECO:0000318"/>
    <property type="project" value="GO_Central"/>
</dbReference>
<dbReference type="CDD" id="cd16291">
    <property type="entry name" value="INTS11-like_MBL-fold"/>
    <property type="match status" value="1"/>
</dbReference>
<dbReference type="FunFam" id="3.40.50.10890:FF:000002">
    <property type="entry name" value="Integrator complex subunit 11"/>
    <property type="match status" value="1"/>
</dbReference>
<dbReference type="FunFam" id="3.60.15.10:FF:000003">
    <property type="entry name" value="Integrator complex subunit 11"/>
    <property type="match status" value="1"/>
</dbReference>
<dbReference type="Gene3D" id="3.40.50.10890">
    <property type="match status" value="1"/>
</dbReference>
<dbReference type="Gene3D" id="3.60.15.10">
    <property type="entry name" value="Ribonuclease Z/Hydroxyacylglutathione hydrolase-like"/>
    <property type="match status" value="1"/>
</dbReference>
<dbReference type="InterPro" id="IPR022712">
    <property type="entry name" value="Beta_Casp"/>
</dbReference>
<dbReference type="InterPro" id="IPR041897">
    <property type="entry name" value="INTS11-like_MBL-fold"/>
</dbReference>
<dbReference type="InterPro" id="IPR048662">
    <property type="entry name" value="IntS11_C"/>
</dbReference>
<dbReference type="InterPro" id="IPR050698">
    <property type="entry name" value="MBL"/>
</dbReference>
<dbReference type="InterPro" id="IPR001279">
    <property type="entry name" value="Metallo-B-lactamas"/>
</dbReference>
<dbReference type="InterPro" id="IPR036866">
    <property type="entry name" value="RibonucZ/Hydroxyglut_hydro"/>
</dbReference>
<dbReference type="InterPro" id="IPR011108">
    <property type="entry name" value="RMMBL"/>
</dbReference>
<dbReference type="PANTHER" id="PTHR11203">
    <property type="entry name" value="CLEAVAGE AND POLYADENYLATION SPECIFICITY FACTOR FAMILY MEMBER"/>
    <property type="match status" value="1"/>
</dbReference>
<dbReference type="PANTHER" id="PTHR11203:SF37">
    <property type="entry name" value="INTEGRATOR COMPLEX SUBUNIT 11"/>
    <property type="match status" value="1"/>
</dbReference>
<dbReference type="Pfam" id="PF10996">
    <property type="entry name" value="Beta-Casp"/>
    <property type="match status" value="1"/>
</dbReference>
<dbReference type="Pfam" id="PF21386">
    <property type="entry name" value="IntS11_C"/>
    <property type="match status" value="1"/>
</dbReference>
<dbReference type="Pfam" id="PF16661">
    <property type="entry name" value="Lactamase_B_6"/>
    <property type="match status" value="1"/>
</dbReference>
<dbReference type="Pfam" id="PF07521">
    <property type="entry name" value="RMMBL"/>
    <property type="match status" value="1"/>
</dbReference>
<dbReference type="SMART" id="SM01027">
    <property type="entry name" value="Beta-Casp"/>
    <property type="match status" value="1"/>
</dbReference>
<dbReference type="SMART" id="SM00849">
    <property type="entry name" value="Lactamase_B"/>
    <property type="match status" value="1"/>
</dbReference>
<dbReference type="SUPFAM" id="SSF56281">
    <property type="entry name" value="Metallo-hydrolase/oxidoreductase"/>
    <property type="match status" value="1"/>
</dbReference>